<proteinExistence type="inferred from homology"/>
<reference key="1">
    <citation type="submission" date="2007-09" db="EMBL/GenBank/DDBJ databases">
        <title>Complete genome sequence of Rickettsia canadensis.</title>
        <authorList>
            <person name="Madan A."/>
            <person name="Fahey J."/>
            <person name="Helton E."/>
            <person name="Ketteman M."/>
            <person name="Madan A."/>
            <person name="Rodrigues S."/>
            <person name="Sanchez A."/>
            <person name="Whiting M."/>
            <person name="Dasch G."/>
            <person name="Eremeeva M."/>
        </authorList>
    </citation>
    <scope>NUCLEOTIDE SEQUENCE [LARGE SCALE GENOMIC DNA]</scope>
    <source>
        <strain>McKiel</strain>
    </source>
</reference>
<dbReference type="EC" id="2.7.7.6" evidence="1"/>
<dbReference type="EMBL" id="CP000409">
    <property type="protein sequence ID" value="ABV73340.1"/>
    <property type="molecule type" value="Genomic_DNA"/>
</dbReference>
<dbReference type="RefSeq" id="WP_012148539.1">
    <property type="nucleotide sequence ID" value="NC_009879.1"/>
</dbReference>
<dbReference type="SMR" id="A8EYA7"/>
<dbReference type="STRING" id="293613.A1E_01975"/>
<dbReference type="KEGG" id="rcm:A1E_01975"/>
<dbReference type="eggNOG" id="COG1758">
    <property type="taxonomic scope" value="Bacteria"/>
</dbReference>
<dbReference type="HOGENOM" id="CLU_138545_0_0_5"/>
<dbReference type="Proteomes" id="UP000007056">
    <property type="component" value="Chromosome"/>
</dbReference>
<dbReference type="GO" id="GO:0000428">
    <property type="term" value="C:DNA-directed RNA polymerase complex"/>
    <property type="evidence" value="ECO:0007669"/>
    <property type="project" value="UniProtKB-KW"/>
</dbReference>
<dbReference type="GO" id="GO:0003677">
    <property type="term" value="F:DNA binding"/>
    <property type="evidence" value="ECO:0007669"/>
    <property type="project" value="UniProtKB-UniRule"/>
</dbReference>
<dbReference type="GO" id="GO:0003899">
    <property type="term" value="F:DNA-directed RNA polymerase activity"/>
    <property type="evidence" value="ECO:0007669"/>
    <property type="project" value="UniProtKB-UniRule"/>
</dbReference>
<dbReference type="GO" id="GO:0006351">
    <property type="term" value="P:DNA-templated transcription"/>
    <property type="evidence" value="ECO:0007669"/>
    <property type="project" value="UniProtKB-UniRule"/>
</dbReference>
<dbReference type="Gene3D" id="3.90.940.10">
    <property type="match status" value="1"/>
</dbReference>
<dbReference type="HAMAP" id="MF_00366">
    <property type="entry name" value="RNApol_bact_RpoZ"/>
    <property type="match status" value="1"/>
</dbReference>
<dbReference type="InterPro" id="IPR003716">
    <property type="entry name" value="DNA-dir_RNA_pol_omega"/>
</dbReference>
<dbReference type="InterPro" id="IPR006110">
    <property type="entry name" value="Pol_omega/Rpo6/RPB6"/>
</dbReference>
<dbReference type="InterPro" id="IPR036161">
    <property type="entry name" value="RPB6/omega-like_sf"/>
</dbReference>
<dbReference type="NCBIfam" id="TIGR00690">
    <property type="entry name" value="rpoZ"/>
    <property type="match status" value="1"/>
</dbReference>
<dbReference type="PANTHER" id="PTHR34476">
    <property type="entry name" value="DNA-DIRECTED RNA POLYMERASE SUBUNIT OMEGA"/>
    <property type="match status" value="1"/>
</dbReference>
<dbReference type="PANTHER" id="PTHR34476:SF1">
    <property type="entry name" value="DNA-DIRECTED RNA POLYMERASE SUBUNIT OMEGA"/>
    <property type="match status" value="1"/>
</dbReference>
<dbReference type="Pfam" id="PF01192">
    <property type="entry name" value="RNA_pol_Rpb6"/>
    <property type="match status" value="1"/>
</dbReference>
<dbReference type="SMART" id="SM01409">
    <property type="entry name" value="RNA_pol_Rpb6"/>
    <property type="match status" value="1"/>
</dbReference>
<dbReference type="SUPFAM" id="SSF63562">
    <property type="entry name" value="RPB6/omega subunit-like"/>
    <property type="match status" value="1"/>
</dbReference>
<evidence type="ECO:0000255" key="1">
    <source>
        <dbReference type="HAMAP-Rule" id="MF_00366"/>
    </source>
</evidence>
<organism>
    <name type="scientific">Rickettsia canadensis (strain McKiel)</name>
    <dbReference type="NCBI Taxonomy" id="293613"/>
    <lineage>
        <taxon>Bacteria</taxon>
        <taxon>Pseudomonadati</taxon>
        <taxon>Pseudomonadota</taxon>
        <taxon>Alphaproteobacteria</taxon>
        <taxon>Rickettsiales</taxon>
        <taxon>Rickettsiaceae</taxon>
        <taxon>Rickettsieae</taxon>
        <taxon>Rickettsia</taxon>
        <taxon>belli group</taxon>
    </lineage>
</organism>
<comment type="function">
    <text evidence="1">Promotes RNA polymerase assembly. Latches the N- and C-terminal regions of the beta' subunit thereby facilitating its interaction with the beta and alpha subunits.</text>
</comment>
<comment type="catalytic activity">
    <reaction evidence="1">
        <text>RNA(n) + a ribonucleoside 5'-triphosphate = RNA(n+1) + diphosphate</text>
        <dbReference type="Rhea" id="RHEA:21248"/>
        <dbReference type="Rhea" id="RHEA-COMP:14527"/>
        <dbReference type="Rhea" id="RHEA-COMP:17342"/>
        <dbReference type="ChEBI" id="CHEBI:33019"/>
        <dbReference type="ChEBI" id="CHEBI:61557"/>
        <dbReference type="ChEBI" id="CHEBI:140395"/>
        <dbReference type="EC" id="2.7.7.6"/>
    </reaction>
</comment>
<comment type="subunit">
    <text evidence="1">The RNAP catalytic core consists of 2 alpha, 1 beta, 1 beta' and 1 omega subunit. When a sigma factor is associated with the core the holoenzyme is formed, which can initiate transcription.</text>
</comment>
<comment type="similarity">
    <text evidence="1">Belongs to the RNA polymerase subunit omega family.</text>
</comment>
<gene>
    <name evidence="1" type="primary">rpoZ</name>
    <name type="ordered locus">A1E_01975</name>
</gene>
<accession>A8EYA7</accession>
<keyword id="KW-0240">DNA-directed RNA polymerase</keyword>
<keyword id="KW-0548">Nucleotidyltransferase</keyword>
<keyword id="KW-0804">Transcription</keyword>
<keyword id="KW-0808">Transferase</keyword>
<feature type="chain" id="PRO_1000005999" description="DNA-directed RNA polymerase subunit omega">
    <location>
        <begin position="1"/>
        <end position="127"/>
    </location>
</feature>
<protein>
    <recommendedName>
        <fullName evidence="1">DNA-directed RNA polymerase subunit omega</fullName>
        <shortName evidence="1">RNAP omega subunit</shortName>
        <ecNumber evidence="1">2.7.7.6</ecNumber>
    </recommendedName>
    <alternativeName>
        <fullName evidence="1">RNA polymerase omega subunit</fullName>
    </alternativeName>
    <alternativeName>
        <fullName evidence="1">Transcriptase subunit omega</fullName>
    </alternativeName>
</protein>
<name>RPOZ_RICCK</name>
<sequence length="127" mass="14733">MARVTAEDCNKIIPDRFRLVVLATRYAKLLNYKVETSYSKKEKRDKPPVIALRRIAAGKVSVAQLEQDLINSLCTRNIIEPLANQDDLEDVEEKFDYLPEVYVGEDYSDLDDQIFIDENGEYDERDK</sequence>